<geneLocation type="chloroplast"/>
<proteinExistence type="inferred from homology"/>
<evidence type="ECO:0000255" key="1">
    <source>
        <dbReference type="HAMAP-Rule" id="MF_01379"/>
    </source>
</evidence>
<dbReference type="EC" id="1.10.3.9" evidence="1"/>
<dbReference type="EMBL" id="U38804">
    <property type="protein sequence ID" value="AAC08098.1"/>
    <property type="molecule type" value="Genomic_DNA"/>
</dbReference>
<dbReference type="PIR" id="S73133">
    <property type="entry name" value="S73133"/>
</dbReference>
<dbReference type="RefSeq" id="NP_053822.1">
    <property type="nucleotide sequence ID" value="NC_000925.1"/>
</dbReference>
<dbReference type="SMR" id="P51212"/>
<dbReference type="GeneID" id="809836"/>
<dbReference type="GO" id="GO:0009535">
    <property type="term" value="C:chloroplast thylakoid membrane"/>
    <property type="evidence" value="ECO:0007669"/>
    <property type="project" value="UniProtKB-SubCell"/>
</dbReference>
<dbReference type="GO" id="GO:0009523">
    <property type="term" value="C:photosystem II"/>
    <property type="evidence" value="ECO:0007669"/>
    <property type="project" value="UniProtKB-KW"/>
</dbReference>
<dbReference type="GO" id="GO:0016168">
    <property type="term" value="F:chlorophyll binding"/>
    <property type="evidence" value="ECO:0007669"/>
    <property type="project" value="UniProtKB-UniRule"/>
</dbReference>
<dbReference type="GO" id="GO:0045156">
    <property type="term" value="F:electron transporter, transferring electrons within the cyclic electron transport pathway of photosynthesis activity"/>
    <property type="evidence" value="ECO:0007669"/>
    <property type="project" value="InterPro"/>
</dbReference>
<dbReference type="GO" id="GO:0005506">
    <property type="term" value="F:iron ion binding"/>
    <property type="evidence" value="ECO:0007669"/>
    <property type="project" value="UniProtKB-UniRule"/>
</dbReference>
<dbReference type="GO" id="GO:0016682">
    <property type="term" value="F:oxidoreductase activity, acting on diphenols and related substances as donors, oxygen as acceptor"/>
    <property type="evidence" value="ECO:0007669"/>
    <property type="project" value="UniProtKB-UniRule"/>
</dbReference>
<dbReference type="GO" id="GO:0009772">
    <property type="term" value="P:photosynthetic electron transport in photosystem II"/>
    <property type="evidence" value="ECO:0007669"/>
    <property type="project" value="InterPro"/>
</dbReference>
<dbReference type="GO" id="GO:0009635">
    <property type="term" value="P:response to herbicide"/>
    <property type="evidence" value="ECO:0007669"/>
    <property type="project" value="UniProtKB-KW"/>
</dbReference>
<dbReference type="CDD" id="cd09289">
    <property type="entry name" value="Photosystem-II_D1"/>
    <property type="match status" value="1"/>
</dbReference>
<dbReference type="FunFam" id="1.20.85.10:FF:000002">
    <property type="entry name" value="Photosystem II protein D1"/>
    <property type="match status" value="1"/>
</dbReference>
<dbReference type="Gene3D" id="1.20.85.10">
    <property type="entry name" value="Photosystem II protein D1-like"/>
    <property type="match status" value="1"/>
</dbReference>
<dbReference type="HAMAP" id="MF_01379">
    <property type="entry name" value="PSII_PsbA_D1"/>
    <property type="match status" value="1"/>
</dbReference>
<dbReference type="InterPro" id="IPR055266">
    <property type="entry name" value="D1/D2"/>
</dbReference>
<dbReference type="InterPro" id="IPR036854">
    <property type="entry name" value="Photo_II_D1/D2_sf"/>
</dbReference>
<dbReference type="InterPro" id="IPR000484">
    <property type="entry name" value="Photo_RC_L/M"/>
</dbReference>
<dbReference type="InterPro" id="IPR055265">
    <property type="entry name" value="Photo_RC_L/M_CS"/>
</dbReference>
<dbReference type="InterPro" id="IPR005867">
    <property type="entry name" value="PSII_D1"/>
</dbReference>
<dbReference type="NCBIfam" id="TIGR01151">
    <property type="entry name" value="psbA"/>
    <property type="match status" value="1"/>
</dbReference>
<dbReference type="PANTHER" id="PTHR33149:SF12">
    <property type="entry name" value="PHOTOSYSTEM II D2 PROTEIN"/>
    <property type="match status" value="1"/>
</dbReference>
<dbReference type="PANTHER" id="PTHR33149">
    <property type="entry name" value="PHOTOSYSTEM II PROTEIN D1"/>
    <property type="match status" value="1"/>
</dbReference>
<dbReference type="Pfam" id="PF00124">
    <property type="entry name" value="Photo_RC"/>
    <property type="match status" value="1"/>
</dbReference>
<dbReference type="PRINTS" id="PR00256">
    <property type="entry name" value="REACTNCENTRE"/>
</dbReference>
<dbReference type="SUPFAM" id="SSF81483">
    <property type="entry name" value="Bacterial photosystem II reaction centre, L and M subunits"/>
    <property type="match status" value="1"/>
</dbReference>
<dbReference type="PROSITE" id="PS00244">
    <property type="entry name" value="REACTION_CENTER"/>
    <property type="match status" value="1"/>
</dbReference>
<gene>
    <name evidence="1" type="primary">psbA</name>
</gene>
<comment type="function">
    <text evidence="1">Photosystem II (PSII) is a light-driven water:plastoquinone oxidoreductase that uses light energy to abstract electrons from H(2)O, generating O(2) and a proton gradient subsequently used for ATP formation. It consists of a core antenna complex that captures photons, and an electron transfer chain that converts photonic excitation into a charge separation. The D1/D2 (PsbA/PsbD) reaction center heterodimer binds P680, the primary electron donor of PSII as well as several subsequent electron acceptors.</text>
</comment>
<comment type="catalytic activity">
    <reaction evidence="1">
        <text>2 a plastoquinone + 4 hnu + 2 H2O = 2 a plastoquinol + O2</text>
        <dbReference type="Rhea" id="RHEA:36359"/>
        <dbReference type="Rhea" id="RHEA-COMP:9561"/>
        <dbReference type="Rhea" id="RHEA-COMP:9562"/>
        <dbReference type="ChEBI" id="CHEBI:15377"/>
        <dbReference type="ChEBI" id="CHEBI:15379"/>
        <dbReference type="ChEBI" id="CHEBI:17757"/>
        <dbReference type="ChEBI" id="CHEBI:30212"/>
        <dbReference type="ChEBI" id="CHEBI:62192"/>
        <dbReference type="EC" id="1.10.3.9"/>
    </reaction>
</comment>
<comment type="cofactor">
    <text evidence="1">The D1/D2 heterodimer binds P680, chlorophylls that are the primary electron donor of PSII, and subsequent electron acceptors. It shares a non-heme iron and each subunit binds pheophytin, quinone, additional chlorophylls, carotenoids and lipids. D1 provides most of the ligands for the Mn4-Ca-O5 cluster of the oxygen-evolving complex (OEC). There is also a Cl(-1) ion associated with D1 and D2, which is required for oxygen evolution. The PSII complex binds additional chlorophylls, carotenoids and specific lipids.</text>
</comment>
<comment type="subunit">
    <text evidence="1">PSII is composed of 1 copy each of membrane proteins PsbA, PsbB, PsbC, PsbD, PsbE, PsbF, PsbH, PsbI, PsbJ, PsbK, PsbL, PsbM, PsbT, PsbX, PsbY, PsbZ, Psb30/Ycf12, at least 3 peripheral proteins of the oxygen-evolving complex and a large number of cofactors. It forms dimeric complexes.</text>
</comment>
<comment type="subcellular location">
    <subcellularLocation>
        <location evidence="1">Plastid</location>
        <location evidence="1">Chloroplast thylakoid membrane</location>
        <topology evidence="1">Multi-pass membrane protein</topology>
    </subcellularLocation>
</comment>
<comment type="PTM">
    <text evidence="1">Tyr-161 forms a radical intermediate that is referred to as redox-active TyrZ, YZ or Y-Z.</text>
</comment>
<comment type="PTM">
    <text evidence="1">C-terminally processed by CTPA; processing is essential to allow assembly of the oxygen-evolving complex and thus photosynthetic growth.</text>
</comment>
<comment type="miscellaneous">
    <text evidence="1">2 of the reaction center chlorophylls (ChlD1 and ChlD2) are entirely coordinated by water.</text>
</comment>
<comment type="miscellaneous">
    <text evidence="1">Herbicides such as atrazine, BNT, diuron or ioxynil bind in the Q(B) binding site and block subsequent electron transfer.</text>
</comment>
<comment type="similarity">
    <text evidence="1">Belongs to the reaction center PufL/M/PsbA/D family.</text>
</comment>
<reference key="1">
    <citation type="journal article" date="1995" name="Plant Mol. Biol. Rep.">
        <title>Complete nucleotide sequence of the Porphyra purpurea chloroplast genome.</title>
        <authorList>
            <person name="Reith M.E."/>
            <person name="Munholland J."/>
        </authorList>
    </citation>
    <scope>NUCLEOTIDE SEQUENCE [LARGE SCALE GENOMIC DNA]</scope>
    <source>
        <strain>Avonport</strain>
    </source>
</reference>
<feature type="chain" id="PRO_0000090467" description="Photosystem II protein D1" evidence="1">
    <location>
        <begin position="1"/>
        <end position="344"/>
    </location>
</feature>
<feature type="propeptide" id="PRO_0000316513" evidence="1">
    <location>
        <begin position="345"/>
        <end position="360"/>
    </location>
</feature>
<feature type="transmembrane region" description="Helical" evidence="1">
    <location>
        <begin position="29"/>
        <end position="46"/>
    </location>
</feature>
<feature type="transmembrane region" description="Helical" evidence="1">
    <location>
        <begin position="118"/>
        <end position="133"/>
    </location>
</feature>
<feature type="transmembrane region" description="Helical" evidence="1">
    <location>
        <begin position="142"/>
        <end position="156"/>
    </location>
</feature>
<feature type="transmembrane region" description="Helical" evidence="1">
    <location>
        <begin position="197"/>
        <end position="218"/>
    </location>
</feature>
<feature type="transmembrane region" description="Helical" evidence="1">
    <location>
        <begin position="274"/>
        <end position="288"/>
    </location>
</feature>
<feature type="binding site" description="axial binding residue" evidence="1">
    <location>
        <position position="118"/>
    </location>
    <ligand>
        <name>chlorophyll a</name>
        <dbReference type="ChEBI" id="CHEBI:58416"/>
        <label>ChlzD1</label>
    </ligand>
    <ligandPart>
        <name>Mg</name>
        <dbReference type="ChEBI" id="CHEBI:25107"/>
    </ligandPart>
</feature>
<feature type="binding site" evidence="1">
    <location>
        <position position="126"/>
    </location>
    <ligand>
        <name>pheophytin a</name>
        <dbReference type="ChEBI" id="CHEBI:136840"/>
        <label>D1</label>
    </ligand>
</feature>
<feature type="binding site" evidence="1">
    <location>
        <position position="170"/>
    </location>
    <ligand>
        <name>[CaMn4O5] cluster</name>
        <dbReference type="ChEBI" id="CHEBI:189552"/>
    </ligand>
</feature>
<feature type="binding site" evidence="1">
    <location>
        <position position="189"/>
    </location>
    <ligand>
        <name>[CaMn4O5] cluster</name>
        <dbReference type="ChEBI" id="CHEBI:189552"/>
    </ligand>
</feature>
<feature type="binding site" description="axial binding residue" evidence="1">
    <location>
        <position position="198"/>
    </location>
    <ligand>
        <name>chlorophyll a</name>
        <dbReference type="ChEBI" id="CHEBI:58416"/>
        <label>PD1</label>
    </ligand>
    <ligandPart>
        <name>Mg</name>
        <dbReference type="ChEBI" id="CHEBI:25107"/>
    </ligandPart>
</feature>
<feature type="binding site" evidence="1">
    <location>
        <position position="215"/>
    </location>
    <ligand>
        <name>a quinone</name>
        <dbReference type="ChEBI" id="CHEBI:132124"/>
        <label>B</label>
    </ligand>
</feature>
<feature type="binding site" evidence="1">
    <location>
        <position position="215"/>
    </location>
    <ligand>
        <name>Fe cation</name>
        <dbReference type="ChEBI" id="CHEBI:24875"/>
        <note>ligand shared with heterodimeric partner</note>
    </ligand>
</feature>
<feature type="binding site" evidence="1">
    <location>
        <begin position="264"/>
        <end position="265"/>
    </location>
    <ligand>
        <name>a quinone</name>
        <dbReference type="ChEBI" id="CHEBI:132124"/>
        <label>B</label>
    </ligand>
</feature>
<feature type="binding site" evidence="1">
    <location>
        <position position="272"/>
    </location>
    <ligand>
        <name>Fe cation</name>
        <dbReference type="ChEBI" id="CHEBI:24875"/>
        <note>ligand shared with heterodimeric partner</note>
    </ligand>
</feature>
<feature type="binding site" evidence="1">
    <location>
        <position position="332"/>
    </location>
    <ligand>
        <name>[CaMn4O5] cluster</name>
        <dbReference type="ChEBI" id="CHEBI:189552"/>
    </ligand>
</feature>
<feature type="binding site" evidence="1">
    <location>
        <position position="333"/>
    </location>
    <ligand>
        <name>[CaMn4O5] cluster</name>
        <dbReference type="ChEBI" id="CHEBI:189552"/>
    </ligand>
</feature>
<feature type="binding site" evidence="1">
    <location>
        <position position="342"/>
    </location>
    <ligand>
        <name>[CaMn4O5] cluster</name>
        <dbReference type="ChEBI" id="CHEBI:189552"/>
    </ligand>
</feature>
<feature type="binding site" evidence="1">
    <location>
        <position position="344"/>
    </location>
    <ligand>
        <name>[CaMn4O5] cluster</name>
        <dbReference type="ChEBI" id="CHEBI:189552"/>
    </ligand>
</feature>
<feature type="site" description="Tyrosine radical intermediate" evidence="1">
    <location>
        <position position="161"/>
    </location>
</feature>
<feature type="site" description="Stabilizes free radical intermediate" evidence="1">
    <location>
        <position position="190"/>
    </location>
</feature>
<feature type="site" description="Cleavage; by CTPA" evidence="1">
    <location>
        <begin position="344"/>
        <end position="345"/>
    </location>
</feature>
<name>PSBA_PORPU</name>
<organism>
    <name type="scientific">Porphyra purpurea</name>
    <name type="common">Red seaweed</name>
    <name type="synonym">Ulva purpurea</name>
    <dbReference type="NCBI Taxonomy" id="2787"/>
    <lineage>
        <taxon>Eukaryota</taxon>
        <taxon>Rhodophyta</taxon>
        <taxon>Bangiophyceae</taxon>
        <taxon>Bangiales</taxon>
        <taxon>Bangiaceae</taxon>
        <taxon>Porphyra</taxon>
    </lineage>
</organism>
<accession>P51212</accession>
<protein>
    <recommendedName>
        <fullName evidence="1">Photosystem II protein D1</fullName>
        <shortName evidence="1">PSII D1 protein</shortName>
        <ecNumber evidence="1">1.10.3.9</ecNumber>
    </recommendedName>
    <alternativeName>
        <fullName evidence="1">Photosystem II Q(B) protein</fullName>
    </alternativeName>
</protein>
<keyword id="KW-0106">Calcium</keyword>
<keyword id="KW-0148">Chlorophyll</keyword>
<keyword id="KW-0150">Chloroplast</keyword>
<keyword id="KW-0157">Chromophore</keyword>
<keyword id="KW-0249">Electron transport</keyword>
<keyword id="KW-0359">Herbicide resistance</keyword>
<keyword id="KW-0408">Iron</keyword>
<keyword id="KW-0460">Magnesium</keyword>
<keyword id="KW-0464">Manganese</keyword>
<keyword id="KW-0472">Membrane</keyword>
<keyword id="KW-0479">Metal-binding</keyword>
<keyword id="KW-0560">Oxidoreductase</keyword>
<keyword id="KW-0602">Photosynthesis</keyword>
<keyword id="KW-0604">Photosystem II</keyword>
<keyword id="KW-0934">Plastid</keyword>
<keyword id="KW-0793">Thylakoid</keyword>
<keyword id="KW-0812">Transmembrane</keyword>
<keyword id="KW-1133">Transmembrane helix</keyword>
<keyword id="KW-0813">Transport</keyword>
<sequence length="360" mass="39458">MTATLQRRESASLWERFCSWITSTENRLYIGWFGVLMIPTLLTATSVFIIAFVAAPPVDIDGIREPVAGSLLYGNNIISGAVIPSSAAIGIHFYPIWEAASLDEWLYNGGPYQLVVLHFLTGVACYIGREWELSYRLGMRPWISVAFTAPVAAAAAVFLVYPIGQGSFSDGMPLGISGTFNFMLVFQAEHNILMHPFHQLGVAGVFGGSLFSAMHGSLVTSSLIRETSENESANYAYKFGQEEETYNIVAAHGYFGRLIFQYASFNNSRSLHFFLGLWPVVGIWLTALSVSTMAFNLNGFNFNQSVVDSQGRVINTWADIINRANLGMEVMHERNAHNFPLDLASGESLPVALTAPAVNG</sequence>